<keyword id="KW-0963">Cytoplasm</keyword>
<keyword id="KW-0488">Methylation</keyword>
<keyword id="KW-0648">Protein biosynthesis</keyword>
<gene>
    <name evidence="1" type="primary">prfA</name>
    <name type="ordered locus">SPA1097</name>
</gene>
<protein>
    <recommendedName>
        <fullName evidence="1">Peptide chain release factor 1</fullName>
        <shortName evidence="1">RF-1</shortName>
    </recommendedName>
</protein>
<reference key="1">
    <citation type="journal article" date="2004" name="Nat. Genet.">
        <title>Comparison of genome degradation in Paratyphi A and Typhi, human-restricted serovars of Salmonella enterica that cause typhoid.</title>
        <authorList>
            <person name="McClelland M."/>
            <person name="Sanderson K.E."/>
            <person name="Clifton S.W."/>
            <person name="Latreille P."/>
            <person name="Porwollik S."/>
            <person name="Sabo A."/>
            <person name="Meyer R."/>
            <person name="Bieri T."/>
            <person name="Ozersky P."/>
            <person name="McLellan M."/>
            <person name="Harkins C.R."/>
            <person name="Wang C."/>
            <person name="Nguyen C."/>
            <person name="Berghoff A."/>
            <person name="Elliott G."/>
            <person name="Kohlberg S."/>
            <person name="Strong C."/>
            <person name="Du F."/>
            <person name="Carter J."/>
            <person name="Kremizki C."/>
            <person name="Layman D."/>
            <person name="Leonard S."/>
            <person name="Sun H."/>
            <person name="Fulton L."/>
            <person name="Nash W."/>
            <person name="Miner T."/>
            <person name="Minx P."/>
            <person name="Delehaunty K."/>
            <person name="Fronick C."/>
            <person name="Magrini V."/>
            <person name="Nhan M."/>
            <person name="Warren W."/>
            <person name="Florea L."/>
            <person name="Spieth J."/>
            <person name="Wilson R.K."/>
        </authorList>
    </citation>
    <scope>NUCLEOTIDE SEQUENCE [LARGE SCALE GENOMIC DNA]</scope>
    <source>
        <strain>ATCC 9150 / SARB42</strain>
    </source>
</reference>
<comment type="function">
    <text evidence="1">Peptide chain release factor 1 directs the termination of translation in response to the peptide chain termination codons UAG and UAA.</text>
</comment>
<comment type="subcellular location">
    <subcellularLocation>
        <location evidence="1">Cytoplasm</location>
    </subcellularLocation>
</comment>
<comment type="PTM">
    <text evidence="1">Methylated by PrmC. Methylation increases the termination efficiency of RF1.</text>
</comment>
<comment type="similarity">
    <text evidence="1">Belongs to the prokaryotic/mitochondrial release factor family.</text>
</comment>
<organism>
    <name type="scientific">Salmonella paratyphi A (strain ATCC 9150 / SARB42)</name>
    <dbReference type="NCBI Taxonomy" id="295319"/>
    <lineage>
        <taxon>Bacteria</taxon>
        <taxon>Pseudomonadati</taxon>
        <taxon>Pseudomonadota</taxon>
        <taxon>Gammaproteobacteria</taxon>
        <taxon>Enterobacterales</taxon>
        <taxon>Enterobacteriaceae</taxon>
        <taxon>Salmonella</taxon>
    </lineage>
</organism>
<feature type="chain" id="PRO_0000263346" description="Peptide chain release factor 1">
    <location>
        <begin position="1"/>
        <end position="360"/>
    </location>
</feature>
<feature type="region of interest" description="Disordered" evidence="2">
    <location>
        <begin position="285"/>
        <end position="313"/>
    </location>
</feature>
<feature type="modified residue" description="N5-methylglutamine" evidence="1">
    <location>
        <position position="235"/>
    </location>
</feature>
<accession>Q5PCQ9</accession>
<dbReference type="EMBL" id="CP000026">
    <property type="protein sequence ID" value="AAV77066.1"/>
    <property type="molecule type" value="Genomic_DNA"/>
</dbReference>
<dbReference type="RefSeq" id="WP_000804704.1">
    <property type="nucleotide sequence ID" value="NC_006511.1"/>
</dbReference>
<dbReference type="SMR" id="Q5PCQ9"/>
<dbReference type="KEGG" id="spt:SPA1097"/>
<dbReference type="HOGENOM" id="CLU_036856_0_1_6"/>
<dbReference type="Proteomes" id="UP000008185">
    <property type="component" value="Chromosome"/>
</dbReference>
<dbReference type="GO" id="GO:0005737">
    <property type="term" value="C:cytoplasm"/>
    <property type="evidence" value="ECO:0007669"/>
    <property type="project" value="UniProtKB-SubCell"/>
</dbReference>
<dbReference type="GO" id="GO:0016149">
    <property type="term" value="F:translation release factor activity, codon specific"/>
    <property type="evidence" value="ECO:0007669"/>
    <property type="project" value="UniProtKB-UniRule"/>
</dbReference>
<dbReference type="FunFam" id="3.30.160.20:FF:000004">
    <property type="entry name" value="Peptide chain release factor 1"/>
    <property type="match status" value="1"/>
</dbReference>
<dbReference type="FunFam" id="3.30.70.1660:FF:000002">
    <property type="entry name" value="Peptide chain release factor 1"/>
    <property type="match status" value="1"/>
</dbReference>
<dbReference type="FunFam" id="3.30.70.1660:FF:000004">
    <property type="entry name" value="Peptide chain release factor 1"/>
    <property type="match status" value="1"/>
</dbReference>
<dbReference type="Gene3D" id="3.30.160.20">
    <property type="match status" value="1"/>
</dbReference>
<dbReference type="Gene3D" id="3.30.70.1660">
    <property type="match status" value="1"/>
</dbReference>
<dbReference type="Gene3D" id="6.10.140.1950">
    <property type="match status" value="1"/>
</dbReference>
<dbReference type="HAMAP" id="MF_00093">
    <property type="entry name" value="Rel_fac_1"/>
    <property type="match status" value="1"/>
</dbReference>
<dbReference type="InterPro" id="IPR005139">
    <property type="entry name" value="PCRF"/>
</dbReference>
<dbReference type="InterPro" id="IPR000352">
    <property type="entry name" value="Pep_chain_release_fac_I"/>
</dbReference>
<dbReference type="InterPro" id="IPR045853">
    <property type="entry name" value="Pep_chain_release_fac_I_sf"/>
</dbReference>
<dbReference type="InterPro" id="IPR050057">
    <property type="entry name" value="Prokaryotic/Mito_RF"/>
</dbReference>
<dbReference type="InterPro" id="IPR004373">
    <property type="entry name" value="RF-1"/>
</dbReference>
<dbReference type="NCBIfam" id="TIGR00019">
    <property type="entry name" value="prfA"/>
    <property type="match status" value="1"/>
</dbReference>
<dbReference type="NCBIfam" id="NF001859">
    <property type="entry name" value="PRK00591.1"/>
    <property type="match status" value="1"/>
</dbReference>
<dbReference type="PANTHER" id="PTHR43804">
    <property type="entry name" value="LD18447P"/>
    <property type="match status" value="1"/>
</dbReference>
<dbReference type="PANTHER" id="PTHR43804:SF7">
    <property type="entry name" value="LD18447P"/>
    <property type="match status" value="1"/>
</dbReference>
<dbReference type="Pfam" id="PF03462">
    <property type="entry name" value="PCRF"/>
    <property type="match status" value="1"/>
</dbReference>
<dbReference type="Pfam" id="PF00472">
    <property type="entry name" value="RF-1"/>
    <property type="match status" value="1"/>
</dbReference>
<dbReference type="SMART" id="SM00937">
    <property type="entry name" value="PCRF"/>
    <property type="match status" value="1"/>
</dbReference>
<dbReference type="SUPFAM" id="SSF75620">
    <property type="entry name" value="Release factor"/>
    <property type="match status" value="1"/>
</dbReference>
<evidence type="ECO:0000255" key="1">
    <source>
        <dbReference type="HAMAP-Rule" id="MF_00093"/>
    </source>
</evidence>
<evidence type="ECO:0000256" key="2">
    <source>
        <dbReference type="SAM" id="MobiDB-lite"/>
    </source>
</evidence>
<sequence>MKPSIVAKLEALHERHEEVQALLGDAGIIADQDRFRALSREYAQLSDVSRCFTDWQQVQDDIETAQMMLDDPEMREMAQEELREAKEKSEQLEQQLQVLLLPKDPDDERNAFLEVRAGTGGDEAALFAGDLFRMYSRYAEARRWRVEIMSMSEGEHGGYKEIIAKISGDGVYGRLKFESGGHRVQRVPATESQGRIHTSACTVAVMPELPEAELPDINPADLRIDTFRSSGAGGQHVNTTDSSIRITHLPTGIVVECQDERSQHKNKAKALSVLGARIHAAETAKRQQAEASTRRNLLGSGDRSDRNRTYNFPQGRVTDHRINLTLYRLDETMEGKLDMLIEPIVQEHQADLLAALSEQE</sequence>
<proteinExistence type="inferred from homology"/>
<name>RF1_SALPA</name>